<name>URE3_PARP8</name>
<protein>
    <recommendedName>
        <fullName evidence="1">Urease subunit gamma</fullName>
        <ecNumber evidence="1">3.5.1.5</ecNumber>
    </recommendedName>
    <alternativeName>
        <fullName evidence="1">Urea amidohydrolase subunit gamma</fullName>
    </alternativeName>
</protein>
<reference key="1">
    <citation type="journal article" date="2014" name="Stand. Genomic Sci.">
        <title>Complete genome sequence of Burkholderia phymatum STM815(T), a broad host range and efficient nitrogen-fixing symbiont of Mimosa species.</title>
        <authorList>
            <person name="Moulin L."/>
            <person name="Klonowska A."/>
            <person name="Caroline B."/>
            <person name="Booth K."/>
            <person name="Vriezen J.A."/>
            <person name="Melkonian R."/>
            <person name="James E.K."/>
            <person name="Young J.P."/>
            <person name="Bena G."/>
            <person name="Hauser L."/>
            <person name="Land M."/>
            <person name="Kyrpides N."/>
            <person name="Bruce D."/>
            <person name="Chain P."/>
            <person name="Copeland A."/>
            <person name="Pitluck S."/>
            <person name="Woyke T."/>
            <person name="Lizotte-Waniewski M."/>
            <person name="Bristow J."/>
            <person name="Riley M."/>
        </authorList>
    </citation>
    <scope>NUCLEOTIDE SEQUENCE [LARGE SCALE GENOMIC DNA]</scope>
    <source>
        <strain>DSM 17167 / CIP 108236 / LMG 21445 / STM815</strain>
    </source>
</reference>
<keyword id="KW-0963">Cytoplasm</keyword>
<keyword id="KW-0378">Hydrolase</keyword>
<keyword id="KW-1185">Reference proteome</keyword>
<sequence>MKLTPRERDKLLIFTAALLAERRRARGLKLNYPEAVALITAALMEAARDGKTVAEVMHYGTTLLTRDDVMEGVPEMIPDIQVEATFPDGTKLVTVHHPIP</sequence>
<evidence type="ECO:0000255" key="1">
    <source>
        <dbReference type="HAMAP-Rule" id="MF_00739"/>
    </source>
</evidence>
<proteinExistence type="inferred from homology"/>
<feature type="chain" id="PRO_1000199856" description="Urease subunit gamma">
    <location>
        <begin position="1"/>
        <end position="100"/>
    </location>
</feature>
<organism>
    <name type="scientific">Paraburkholderia phymatum (strain DSM 17167 / CIP 108236 / LMG 21445 / STM815)</name>
    <name type="common">Burkholderia phymatum</name>
    <dbReference type="NCBI Taxonomy" id="391038"/>
    <lineage>
        <taxon>Bacteria</taxon>
        <taxon>Pseudomonadati</taxon>
        <taxon>Pseudomonadota</taxon>
        <taxon>Betaproteobacteria</taxon>
        <taxon>Burkholderiales</taxon>
        <taxon>Burkholderiaceae</taxon>
        <taxon>Paraburkholderia</taxon>
    </lineage>
</organism>
<gene>
    <name evidence="1" type="primary">ureA</name>
    <name type="ordered locus">Bphy_2258</name>
</gene>
<dbReference type="EC" id="3.5.1.5" evidence="1"/>
<dbReference type="EMBL" id="CP001043">
    <property type="protein sequence ID" value="ACC71433.1"/>
    <property type="molecule type" value="Genomic_DNA"/>
</dbReference>
<dbReference type="RefSeq" id="WP_012401639.1">
    <property type="nucleotide sequence ID" value="NC_010622.1"/>
</dbReference>
<dbReference type="SMR" id="B2JF65"/>
<dbReference type="STRING" id="391038.Bphy_2258"/>
<dbReference type="KEGG" id="bph:Bphy_2258"/>
<dbReference type="eggNOG" id="COG0831">
    <property type="taxonomic scope" value="Bacteria"/>
</dbReference>
<dbReference type="HOGENOM" id="CLU_145825_1_0_4"/>
<dbReference type="OrthoDB" id="9797217at2"/>
<dbReference type="UniPathway" id="UPA00258">
    <property type="reaction ID" value="UER00370"/>
</dbReference>
<dbReference type="Proteomes" id="UP000001192">
    <property type="component" value="Chromosome 1"/>
</dbReference>
<dbReference type="GO" id="GO:0005737">
    <property type="term" value="C:cytoplasm"/>
    <property type="evidence" value="ECO:0007669"/>
    <property type="project" value="UniProtKB-SubCell"/>
</dbReference>
<dbReference type="GO" id="GO:0016151">
    <property type="term" value="F:nickel cation binding"/>
    <property type="evidence" value="ECO:0007669"/>
    <property type="project" value="InterPro"/>
</dbReference>
<dbReference type="GO" id="GO:0009039">
    <property type="term" value="F:urease activity"/>
    <property type="evidence" value="ECO:0007669"/>
    <property type="project" value="UniProtKB-UniRule"/>
</dbReference>
<dbReference type="GO" id="GO:0043419">
    <property type="term" value="P:urea catabolic process"/>
    <property type="evidence" value="ECO:0007669"/>
    <property type="project" value="UniProtKB-UniRule"/>
</dbReference>
<dbReference type="CDD" id="cd00390">
    <property type="entry name" value="Urease_gamma"/>
    <property type="match status" value="1"/>
</dbReference>
<dbReference type="Gene3D" id="3.30.280.10">
    <property type="entry name" value="Urease, gamma-like subunit"/>
    <property type="match status" value="1"/>
</dbReference>
<dbReference type="HAMAP" id="MF_00739">
    <property type="entry name" value="Urease_gamma"/>
    <property type="match status" value="1"/>
</dbReference>
<dbReference type="InterPro" id="IPR012010">
    <property type="entry name" value="Urease_gamma"/>
</dbReference>
<dbReference type="InterPro" id="IPR002026">
    <property type="entry name" value="Urease_gamma/gamma-beta_su"/>
</dbReference>
<dbReference type="InterPro" id="IPR036463">
    <property type="entry name" value="Urease_gamma_sf"/>
</dbReference>
<dbReference type="InterPro" id="IPR050069">
    <property type="entry name" value="Urease_subunit"/>
</dbReference>
<dbReference type="NCBIfam" id="NF009712">
    <property type="entry name" value="PRK13241.1"/>
    <property type="match status" value="1"/>
</dbReference>
<dbReference type="NCBIfam" id="TIGR00193">
    <property type="entry name" value="urease_gam"/>
    <property type="match status" value="1"/>
</dbReference>
<dbReference type="PANTHER" id="PTHR33569">
    <property type="entry name" value="UREASE"/>
    <property type="match status" value="1"/>
</dbReference>
<dbReference type="PANTHER" id="PTHR33569:SF1">
    <property type="entry name" value="UREASE"/>
    <property type="match status" value="1"/>
</dbReference>
<dbReference type="Pfam" id="PF00547">
    <property type="entry name" value="Urease_gamma"/>
    <property type="match status" value="1"/>
</dbReference>
<dbReference type="PIRSF" id="PIRSF001223">
    <property type="entry name" value="Urease_gamma"/>
    <property type="match status" value="1"/>
</dbReference>
<dbReference type="SUPFAM" id="SSF54111">
    <property type="entry name" value="Urease, gamma-subunit"/>
    <property type="match status" value="1"/>
</dbReference>
<accession>B2JF65</accession>
<comment type="catalytic activity">
    <reaction evidence="1">
        <text>urea + 2 H2O + H(+) = hydrogencarbonate + 2 NH4(+)</text>
        <dbReference type="Rhea" id="RHEA:20557"/>
        <dbReference type="ChEBI" id="CHEBI:15377"/>
        <dbReference type="ChEBI" id="CHEBI:15378"/>
        <dbReference type="ChEBI" id="CHEBI:16199"/>
        <dbReference type="ChEBI" id="CHEBI:17544"/>
        <dbReference type="ChEBI" id="CHEBI:28938"/>
        <dbReference type="EC" id="3.5.1.5"/>
    </reaction>
</comment>
<comment type="pathway">
    <text evidence="1">Nitrogen metabolism; urea degradation; CO(2) and NH(3) from urea (urease route): step 1/1.</text>
</comment>
<comment type="subunit">
    <text evidence="1">Heterotrimer of UreA (gamma), UreB (beta) and UreC (alpha) subunits. Three heterotrimers associate to form the active enzyme.</text>
</comment>
<comment type="subcellular location">
    <subcellularLocation>
        <location evidence="1">Cytoplasm</location>
    </subcellularLocation>
</comment>
<comment type="similarity">
    <text evidence="1">Belongs to the urease gamma subunit family.</text>
</comment>